<keyword id="KW-0489">Methyltransferase</keyword>
<keyword id="KW-0690">Ribosome biogenesis</keyword>
<keyword id="KW-0694">RNA-binding</keyword>
<keyword id="KW-0698">rRNA processing</keyword>
<keyword id="KW-0699">rRNA-binding</keyword>
<keyword id="KW-0949">S-adenosyl-L-methionine</keyword>
<keyword id="KW-0808">Transferase</keyword>
<accession>B6YTM6</accession>
<name>NEP1_THEON</name>
<feature type="chain" id="PRO_1000129103" description="Ribosomal RNA small subunit methyltransferase Nep1">
    <location>
        <begin position="1"/>
        <end position="219"/>
    </location>
</feature>
<feature type="binding site" evidence="1">
    <location>
        <position position="178"/>
    </location>
    <ligand>
        <name>S-adenosyl-L-methionine</name>
        <dbReference type="ChEBI" id="CHEBI:59789"/>
    </ligand>
</feature>
<feature type="binding site" evidence="1">
    <location>
        <position position="183"/>
    </location>
    <ligand>
        <name>S-adenosyl-L-methionine</name>
        <dbReference type="ChEBI" id="CHEBI:59789"/>
    </ligand>
</feature>
<feature type="binding site" evidence="1">
    <location>
        <begin position="196"/>
        <end position="201"/>
    </location>
    <ligand>
        <name>S-adenosyl-L-methionine</name>
        <dbReference type="ChEBI" id="CHEBI:59789"/>
    </ligand>
</feature>
<feature type="site" description="Interaction with substrate rRNA" evidence="1">
    <location>
        <position position="60"/>
    </location>
</feature>
<feature type="site" description="Stabilizes Arg-60" evidence="1">
    <location>
        <position position="62"/>
    </location>
</feature>
<feature type="site" description="Interaction with substrate rRNA" evidence="1">
    <location>
        <position position="101"/>
    </location>
</feature>
<feature type="site" description="Interaction with substrate rRNA" evidence="1">
    <location>
        <position position="104"/>
    </location>
</feature>
<feature type="site" description="Interaction with substrate rRNA" evidence="1">
    <location>
        <position position="108"/>
    </location>
</feature>
<reference key="1">
    <citation type="journal article" date="2008" name="J. Bacteriol.">
        <title>The complete genome sequence of Thermococcus onnurineus NA1 reveals a mixed heterotrophic and carboxydotrophic metabolism.</title>
        <authorList>
            <person name="Lee H.S."/>
            <person name="Kang S.G."/>
            <person name="Bae S.S."/>
            <person name="Lim J.K."/>
            <person name="Cho Y."/>
            <person name="Kim Y.J."/>
            <person name="Jeon J.H."/>
            <person name="Cha S.-S."/>
            <person name="Kwon K.K."/>
            <person name="Kim H.-T."/>
            <person name="Park C.-J."/>
            <person name="Lee H.-W."/>
            <person name="Kim S.I."/>
            <person name="Chun J."/>
            <person name="Colwell R.R."/>
            <person name="Kim S.-J."/>
            <person name="Lee J.-H."/>
        </authorList>
    </citation>
    <scope>NUCLEOTIDE SEQUENCE [LARGE SCALE GENOMIC DNA]</scope>
    <source>
        <strain>NA1</strain>
    </source>
</reference>
<organism>
    <name type="scientific">Thermococcus onnurineus (strain NA1)</name>
    <dbReference type="NCBI Taxonomy" id="523850"/>
    <lineage>
        <taxon>Archaea</taxon>
        <taxon>Methanobacteriati</taxon>
        <taxon>Methanobacteriota</taxon>
        <taxon>Thermococci</taxon>
        <taxon>Thermococcales</taxon>
        <taxon>Thermococcaceae</taxon>
        <taxon>Thermococcus</taxon>
    </lineage>
</organism>
<evidence type="ECO:0000255" key="1">
    <source>
        <dbReference type="HAMAP-Rule" id="MF_00554"/>
    </source>
</evidence>
<evidence type="ECO:0000305" key="2"/>
<dbReference type="EC" id="2.1.1.-" evidence="1"/>
<dbReference type="EMBL" id="CP000855">
    <property type="protein sequence ID" value="ACJ15913.1"/>
    <property type="molecule type" value="Genomic_DNA"/>
</dbReference>
<dbReference type="RefSeq" id="WP_012571385.1">
    <property type="nucleotide sequence ID" value="NC_011529.1"/>
</dbReference>
<dbReference type="SMR" id="B6YTM6"/>
<dbReference type="STRING" id="523850.TON_0428"/>
<dbReference type="GeneID" id="7016723"/>
<dbReference type="KEGG" id="ton:TON_0428"/>
<dbReference type="PATRIC" id="fig|523850.10.peg.430"/>
<dbReference type="eggNOG" id="arCOG04122">
    <property type="taxonomic scope" value="Archaea"/>
</dbReference>
<dbReference type="HOGENOM" id="CLU_055846_1_3_2"/>
<dbReference type="OrthoDB" id="7612at2157"/>
<dbReference type="Proteomes" id="UP000002727">
    <property type="component" value="Chromosome"/>
</dbReference>
<dbReference type="GO" id="GO:0070037">
    <property type="term" value="F:rRNA (pseudouridine) methyltransferase activity"/>
    <property type="evidence" value="ECO:0007669"/>
    <property type="project" value="UniProtKB-UniRule"/>
</dbReference>
<dbReference type="GO" id="GO:0019843">
    <property type="term" value="F:rRNA binding"/>
    <property type="evidence" value="ECO:0007669"/>
    <property type="project" value="UniProtKB-UniRule"/>
</dbReference>
<dbReference type="GO" id="GO:0070475">
    <property type="term" value="P:rRNA base methylation"/>
    <property type="evidence" value="ECO:0007669"/>
    <property type="project" value="InterPro"/>
</dbReference>
<dbReference type="CDD" id="cd18088">
    <property type="entry name" value="Nep1-like"/>
    <property type="match status" value="1"/>
</dbReference>
<dbReference type="FunFam" id="3.40.1280.10:FF:000042">
    <property type="entry name" value="Ribosomal RNA small subunit methyltransferase Nep1"/>
    <property type="match status" value="1"/>
</dbReference>
<dbReference type="Gene3D" id="3.40.1280.10">
    <property type="match status" value="1"/>
</dbReference>
<dbReference type="HAMAP" id="MF_00554">
    <property type="entry name" value="NEP1"/>
    <property type="match status" value="1"/>
</dbReference>
<dbReference type="InterPro" id="IPR029028">
    <property type="entry name" value="Alpha/beta_knot_MTases"/>
</dbReference>
<dbReference type="InterPro" id="IPR005304">
    <property type="entry name" value="Rbsml_bgen_MeTrfase_EMG1/NEP1"/>
</dbReference>
<dbReference type="InterPro" id="IPR023503">
    <property type="entry name" value="Ribosome_NEP1_arc"/>
</dbReference>
<dbReference type="InterPro" id="IPR029026">
    <property type="entry name" value="tRNA_m1G_MTases_N"/>
</dbReference>
<dbReference type="NCBIfam" id="NF003205">
    <property type="entry name" value="PRK04171.1-5"/>
    <property type="match status" value="1"/>
</dbReference>
<dbReference type="NCBIfam" id="NF003207">
    <property type="entry name" value="PRK04171.2-2"/>
    <property type="match status" value="1"/>
</dbReference>
<dbReference type="PANTHER" id="PTHR12636">
    <property type="entry name" value="NEP1/MRA1"/>
    <property type="match status" value="1"/>
</dbReference>
<dbReference type="PANTHER" id="PTHR12636:SF5">
    <property type="entry name" value="RIBOSOMAL RNA SMALL SUBUNIT METHYLTRANSFERASE NEP1"/>
    <property type="match status" value="1"/>
</dbReference>
<dbReference type="Pfam" id="PF03587">
    <property type="entry name" value="EMG1"/>
    <property type="match status" value="1"/>
</dbReference>
<dbReference type="SUPFAM" id="SSF75217">
    <property type="entry name" value="alpha/beta knot"/>
    <property type="match status" value="1"/>
</dbReference>
<sequence>MLHLVIADSELELAPKSIVDHPAIVNYAKRRNKKPEEVLLDSTYHHSALKKLEDGERRGRPDIVHVCLLNALESIANKEGKLRVYVHTRNDEVIYIKPETRIPRNYNRFVGLMESLFKNGVVPEGLELLRMEEKSLAELIDEIKPDGVFVMHENGESMKPQEFGKVLAGLQSPLVVVGGFPHGDFRSEIPGKKISLYKAPLMAWTVVNEIIINFEHWVL</sequence>
<proteinExistence type="inferred from homology"/>
<comment type="function">
    <text evidence="1">Methyltransferase involved in ribosomal biogenesis. Specifically catalyzes the N1-methylation of the pseudouridine corresponding to position 914 in M.jannaschii 16S rRNA.</text>
</comment>
<comment type="catalytic activity">
    <reaction evidence="1">
        <text>a pseudouridine in rRNA + S-adenosyl-L-methionine = an N(1)-methylpseudouridine in rRNA + S-adenosyl-L-homocysteine + H(+)</text>
        <dbReference type="Rhea" id="RHEA:46696"/>
        <dbReference type="Rhea" id="RHEA-COMP:11634"/>
        <dbReference type="Rhea" id="RHEA-COMP:13933"/>
        <dbReference type="ChEBI" id="CHEBI:15378"/>
        <dbReference type="ChEBI" id="CHEBI:57856"/>
        <dbReference type="ChEBI" id="CHEBI:59789"/>
        <dbReference type="ChEBI" id="CHEBI:65314"/>
        <dbReference type="ChEBI" id="CHEBI:74890"/>
    </reaction>
</comment>
<comment type="subunit">
    <text evidence="1">Homodimer.</text>
</comment>
<comment type="similarity">
    <text evidence="2">Belongs to the class IV-like SAM-binding methyltransferase superfamily. RNA methyltransferase NEP1 family.</text>
</comment>
<gene>
    <name evidence="1" type="primary">nep1</name>
    <name type="ordered locus">TON_0428</name>
</gene>
<protein>
    <recommendedName>
        <fullName evidence="1">Ribosomal RNA small subunit methyltransferase Nep1</fullName>
        <ecNumber evidence="1">2.1.1.-</ecNumber>
    </recommendedName>
    <alternativeName>
        <fullName evidence="1">16S rRNA (pseudouridine-N1-)-methyltransferase Nep1</fullName>
    </alternativeName>
</protein>